<organism>
    <name type="scientific">Micrococcus luteus</name>
    <name type="common">Micrococcus lysodeikticus</name>
    <dbReference type="NCBI Taxonomy" id="1270"/>
    <lineage>
        <taxon>Bacteria</taxon>
        <taxon>Bacillati</taxon>
        <taxon>Actinomycetota</taxon>
        <taxon>Actinomycetes</taxon>
        <taxon>Micrococcales</taxon>
        <taxon>Micrococcaceae</taxon>
        <taxon>Micrococcus</taxon>
    </lineage>
</organism>
<proteinExistence type="evidence at protein level"/>
<feature type="chain" id="PRO_0000123637" description="Ditrans,polycis-undecaprenyl-diphosphate synthase ((2E,6E)-farnesyl-diphosphate specific)">
    <location>
        <begin position="1"/>
        <end position="249"/>
    </location>
</feature>
<feature type="active site">
    <location>
        <position position="29"/>
    </location>
</feature>
<feature type="active site" description="Proton acceptor" evidence="1">
    <location>
        <position position="77"/>
    </location>
</feature>
<feature type="binding site" evidence="1">
    <location>
        <position position="29"/>
    </location>
    <ligand>
        <name>Mg(2+)</name>
        <dbReference type="ChEBI" id="CHEBI:18420"/>
    </ligand>
</feature>
<feature type="binding site">
    <location>
        <begin position="30"/>
        <end position="33"/>
    </location>
    <ligand>
        <name>substrate</name>
    </ligand>
</feature>
<feature type="binding site" evidence="1">
    <location>
        <position position="34"/>
    </location>
    <ligand>
        <name>substrate</name>
    </ligand>
</feature>
<feature type="binding site">
    <location>
        <position position="42"/>
    </location>
    <ligand>
        <name>substrate</name>
    </ligand>
</feature>
<feature type="binding site" evidence="1">
    <location>
        <position position="46"/>
    </location>
    <ligand>
        <name>substrate</name>
    </ligand>
</feature>
<feature type="binding site" evidence="1">
    <location>
        <begin position="74"/>
        <end position="76"/>
    </location>
    <ligand>
        <name>substrate</name>
    </ligand>
</feature>
<feature type="binding site" evidence="1">
    <location>
        <position position="78"/>
    </location>
    <ligand>
        <name>substrate</name>
    </ligand>
</feature>
<feature type="binding site" evidence="1">
    <location>
        <position position="80"/>
    </location>
    <ligand>
        <name>substrate</name>
    </ligand>
</feature>
<feature type="binding site" evidence="1">
    <location>
        <position position="197"/>
    </location>
    <ligand>
        <name>substrate</name>
    </ligand>
</feature>
<feature type="binding site" evidence="1">
    <location>
        <begin position="203"/>
        <end position="205"/>
    </location>
    <ligand>
        <name>substrate</name>
    </ligand>
</feature>
<feature type="binding site" evidence="1">
    <location>
        <position position="216"/>
    </location>
    <ligand>
        <name>Mg(2+)</name>
        <dbReference type="ChEBI" id="CHEBI:18420"/>
    </ligand>
</feature>
<feature type="mutagenesis site" description="Great decrease in activity." evidence="5">
    <original>D</original>
    <variation>A</variation>
    <location>
        <position position="29"/>
    </location>
</feature>
<feature type="mutagenesis site" description="Great decrease in activity. Decrease in activity; when associated with G-42." evidence="5">
    <original>G</original>
    <variation>R</variation>
    <location>
        <position position="32"/>
    </location>
</feature>
<feature type="mutagenesis site" description="Decrease in affinity for decaprenyl diphosphate substrate analog." evidence="5">
    <original>R</original>
    <variation>A</variation>
    <location>
        <position position="33"/>
    </location>
</feature>
<feature type="mutagenesis site" description="Great decrease in activity. Decrease in activity; when associated with R-32." evidence="5">
    <original>R</original>
    <variation>G</variation>
    <location>
        <position position="42"/>
    </location>
</feature>
<feature type="mutagenesis site" description="Decrease in activity; reduced affinity for substrate." evidence="4">
    <original>F</original>
    <variation>A</variation>
    <location>
        <position position="73"/>
    </location>
</feature>
<feature type="mutagenesis site" description="Decrease in activity; reduced affinity for substrate." evidence="4">
    <original>S</original>
    <variation>A</variation>
    <location>
        <position position="74"/>
    </location>
</feature>
<feature type="mutagenesis site" description="Slight decrease in activity." evidence="5">
    <original>E</original>
    <variation>Q</variation>
    <location>
        <position position="76"/>
    </location>
</feature>
<feature type="mutagenesis site" description="Great decrease in activity." evidence="2">
    <original>N</original>
    <variation>A</variation>
    <variation>D</variation>
    <variation>Q</variation>
    <location>
        <position position="77"/>
    </location>
</feature>
<feature type="mutagenesis site" description="Decrease in activity." evidence="2">
    <original>W</original>
    <variation>I</variation>
    <variation>R</variation>
    <variation>D</variation>
    <location>
        <position position="78"/>
    </location>
</feature>
<feature type="mutagenesis site" description="Great decrease in activity." evidence="5">
    <original>R</original>
    <variation>A</variation>
    <location>
        <position position="80"/>
    </location>
</feature>
<feature type="mutagenesis site" description="Slight decrease in activity." evidence="5">
    <original>E</original>
    <variation>Q</variation>
    <location>
        <position position="84"/>
    </location>
</feature>
<feature type="mutagenesis site" description="Decrease in activity." evidence="4">
    <original>E</original>
    <variation>Q</variation>
    <location>
        <position position="193"/>
    </location>
</feature>
<feature type="mutagenesis site" description="Great decrease in activity; reduced affinity for substrate." evidence="4">
    <original>R</original>
    <variation>S</variation>
    <location>
        <position position="197"/>
    </location>
</feature>
<feature type="mutagenesis site" description="Slight decrease in activity." evidence="4">
    <original>E</original>
    <variation>Q</variation>
    <location>
        <position position="201"/>
    </location>
</feature>
<feature type="mutagenesis site" description="Great decrease in activity; reduced affinity for substrate." evidence="4">
    <original>R</original>
    <variation>S</variation>
    <location>
        <position position="203"/>
    </location>
</feature>
<feature type="mutagenesis site" description="Great decrease in activity; reduced affinity for substrate." evidence="4">
    <original>E</original>
    <variation>Q</variation>
    <location>
        <position position="216"/>
    </location>
</feature>
<feature type="mutagenesis site" description="Decrease in activity." evidence="4">
    <original>D</original>
    <variation>A</variation>
    <location>
        <position position="221"/>
    </location>
</feature>
<feature type="mutagenesis site" description="Slight decrease in activity." evidence="4">
    <original>D</original>
    <variation>A</variation>
    <location>
        <position position="226"/>
    </location>
</feature>
<feature type="strand" evidence="9">
    <location>
        <begin position="22"/>
        <end position="28"/>
    </location>
</feature>
<feature type="helix" evidence="9">
    <location>
        <begin position="31"/>
        <end position="37"/>
    </location>
</feature>
<feature type="helix" evidence="9">
    <location>
        <begin position="42"/>
        <end position="63"/>
    </location>
</feature>
<feature type="strand" evidence="9">
    <location>
        <begin position="67"/>
        <end position="72"/>
    </location>
</feature>
<feature type="helix" evidence="9">
    <location>
        <begin position="87"/>
        <end position="89"/>
    </location>
</feature>
<feature type="helix" evidence="9">
    <location>
        <begin position="91"/>
        <end position="105"/>
    </location>
</feature>
<feature type="strand" evidence="9">
    <location>
        <begin position="109"/>
        <end position="114"/>
    </location>
</feature>
<feature type="helix" evidence="9">
    <location>
        <begin position="116"/>
        <end position="118"/>
    </location>
</feature>
<feature type="helix" evidence="9">
    <location>
        <begin position="121"/>
        <end position="132"/>
    </location>
</feature>
<feature type="turn" evidence="9">
    <location>
        <begin position="133"/>
        <end position="136"/>
    </location>
</feature>
<feature type="strand" evidence="9">
    <location>
        <begin position="141"/>
        <end position="145"/>
    </location>
</feature>
<feature type="helix" evidence="9">
    <location>
        <begin position="150"/>
        <end position="166"/>
    </location>
</feature>
<feature type="helix" evidence="9">
    <location>
        <begin position="172"/>
        <end position="174"/>
    </location>
</feature>
<feature type="helix" evidence="9">
    <location>
        <begin position="177"/>
        <end position="180"/>
    </location>
</feature>
<feature type="helix" evidence="9">
    <location>
        <begin position="181"/>
        <end position="183"/>
    </location>
</feature>
<feature type="turn" evidence="9">
    <location>
        <begin position="185"/>
        <end position="188"/>
    </location>
</feature>
<feature type="strand" evidence="9">
    <location>
        <begin position="193"/>
        <end position="197"/>
    </location>
</feature>
<feature type="turn" evidence="9">
    <location>
        <begin position="209"/>
        <end position="214"/>
    </location>
</feature>
<feature type="strand" evidence="9">
    <location>
        <begin position="216"/>
        <end position="219"/>
    </location>
</feature>
<feature type="helix" evidence="9">
    <location>
        <begin position="224"/>
        <end position="226"/>
    </location>
</feature>
<feature type="helix" evidence="9">
    <location>
        <begin position="229"/>
        <end position="239"/>
    </location>
</feature>
<protein>
    <recommendedName>
        <fullName>Ditrans,polycis-undecaprenyl-diphosphate synthase ((2E,6E)-farnesyl-diphosphate specific)</fullName>
        <ecNumber>2.5.1.31</ecNumber>
    </recommendedName>
    <alternativeName>
        <fullName>Ditrans,polycis-undecaprenylcistransferase</fullName>
    </alternativeName>
    <alternativeName>
        <fullName>Undecaprenyl diphosphate synthase</fullName>
        <shortName>UDS</shortName>
    </alternativeName>
    <alternativeName>
        <fullName>Undecaprenyl pyrophosphate synthase</fullName>
        <shortName>UPP synthase</shortName>
    </alternativeName>
</protein>
<comment type="function">
    <text evidence="6 7">Generates ditrans,octacis-undecaprenyl pyrophosphate (UPP) from isopentenyl pyrophosphate (IPP) and farnesyl diphosphate. UPP is the precursor of glycosyl carrier lipid in the biosynthesis of bacterial cell wall polysaccharide components such as peptidoglycan and lipopolysaccharide.</text>
</comment>
<comment type="catalytic activity">
    <reaction evidence="7">
        <text>8 isopentenyl diphosphate + (2E,6E)-farnesyl diphosphate = di-trans,octa-cis-undecaprenyl diphosphate + 8 diphosphate</text>
        <dbReference type="Rhea" id="RHEA:27551"/>
        <dbReference type="ChEBI" id="CHEBI:33019"/>
        <dbReference type="ChEBI" id="CHEBI:58405"/>
        <dbReference type="ChEBI" id="CHEBI:128769"/>
        <dbReference type="ChEBI" id="CHEBI:175763"/>
        <dbReference type="EC" id="2.5.1.31"/>
    </reaction>
</comment>
<comment type="cofactor">
    <cofactor evidence="1">
        <name>Mg(2+)</name>
        <dbReference type="ChEBI" id="CHEBI:18420"/>
    </cofactor>
    <text evidence="1">Binds 2 magnesium ions per subunit.</text>
</comment>
<comment type="subunit">
    <text evidence="3">Homodimer.</text>
</comment>
<comment type="domain">
    <text>This enzyme shows a novel protein fold completely different from the 'isoprenoid synthase fold' that is thought to be a common structure for the enzymes relating to isoprenoid biosynthesis.</text>
</comment>
<comment type="similarity">
    <text evidence="8">Belongs to the UPP synthase family.</text>
</comment>
<keyword id="KW-0002">3D-structure</keyword>
<keyword id="KW-0903">Direct protein sequencing</keyword>
<keyword id="KW-0460">Magnesium</keyword>
<keyword id="KW-0479">Metal-binding</keyword>
<keyword id="KW-0808">Transferase</keyword>
<name>UPPS_MICLU</name>
<gene>
    <name type="primary">uppS</name>
</gene>
<reference key="1">
    <citation type="journal article" date="1998" name="J. Biol. Chem.">
        <title>Molecular cloning, expression, and purification of undecaprenyl diphosphate synthase. No sequence similarity between E- and Z-prenyl diphosphate synthases.</title>
        <authorList>
            <person name="Shimizu N."/>
            <person name="Koyama T."/>
            <person name="Ogura K."/>
        </authorList>
    </citation>
    <scope>NUCLEOTIDE SEQUENCE [GENOMIC DNA]</scope>
    <scope>PROTEIN SEQUENCE OF 1-14</scope>
    <scope>FUNCTION AS AN UNDECAPRENYL DIPHOSPHATE SYNTHASE</scope>
    <scope>CATALYTIC ACTIVITY</scope>
    <source>
        <strain>B-P 26</strain>
    </source>
</reference>
<reference key="2">
    <citation type="journal article" date="1988" name="J. Biochem.">
        <title>Undecaprenyl diphosphate synthase from Micrococcus luteus B-P 26: essential factors for the enzymatic activity.</title>
        <authorList>
            <person name="Koyama T."/>
            <person name="Yoshida I."/>
            <person name="Ogura K."/>
        </authorList>
    </citation>
    <scope>FUNCTION AS AN UNDECAPRENYL DIPHOSPHATE SYNTHASE</scope>
    <source>
        <strain>B-P 26</strain>
    </source>
</reference>
<reference key="3">
    <citation type="journal article" date="2000" name="J. Biochem.">
        <title>Significance of Asn-77 and Trp-78 in the catalytic function of undecaprenyl diphosphate synthase of Micrococcus luteus B-P 26.</title>
        <authorList>
            <person name="Fujikura K."/>
            <person name="Zhang Y.W."/>
            <person name="Yoshizaki H."/>
            <person name="Nishino T."/>
            <person name="Koyama T."/>
        </authorList>
    </citation>
    <scope>MUTAGENESIS OF ASN-77 AND TRP-78</scope>
    <source>
        <strain>B-P 26</strain>
    </source>
</reference>
<reference key="4">
    <citation type="journal article" date="2001" name="J. Biol. Chem.">
        <title>Identification of Significant residues for homoallylic substrate binding of Micrococcus luteus B-P 26 undecaprenyl diphosphate synthase.</title>
        <authorList>
            <person name="Kharel Y."/>
            <person name="Zhang Y.W."/>
            <person name="Fujihashi M."/>
            <person name="Miki K."/>
            <person name="Koyama T."/>
        </authorList>
    </citation>
    <scope>MUTAGENESIS OF PHE-73; SER-74; GLU-193; ARG-197; GLU-201; ARG-203; GLU-216; ASP-221 AND ASP-226</scope>
    <source>
        <strain>B-P 26</strain>
    </source>
</reference>
<reference key="5">
    <citation type="journal article" date="2003" name="Biochemistry">
        <title>Mutational analysis of allylic substrate binding site of Micrococcus luteus B-P 26 undecaprenyl diphosphate synthase.</title>
        <authorList>
            <person name="Fujikura K."/>
            <person name="Zhang Y.-W."/>
            <person name="Fujihashi M."/>
            <person name="Miki K."/>
            <person name="Koyama T."/>
        </authorList>
    </citation>
    <scope>MUTAGENESIS OF ASP-29; GLY-32; ARG-33; ARG-42; GLU-76; ARG-80 AND GLU-84</scope>
    <source>
        <strain>B-P 26</strain>
    </source>
</reference>
<reference key="6">
    <citation type="journal article" date="1999" name="Acta Crystallogr. D">
        <title>Crystallization and preliminary X-ray diffraction studies of undecaprenyl diphosphate synthase from Micrococcus luteus B-P 26.</title>
        <authorList>
            <person name="Fujihashi M."/>
            <person name="Shimizu N."/>
            <person name="Zhang Y.W."/>
            <person name="Koyama T."/>
            <person name="Miki K."/>
        </authorList>
    </citation>
    <scope>CRYSTALLIZATION</scope>
    <source>
        <strain>B-P 26</strain>
    </source>
</reference>
<reference key="7">
    <citation type="journal article" date="2001" name="Proc. Natl. Acad. Sci. U.S.A.">
        <title>Crystal structure of cis-prenyl chain elongating enzyme, undecaprenyl diphosphate synthase.</title>
        <authorList>
            <person name="Fujihashi M."/>
            <person name="Zhang Y.-W."/>
            <person name="Higuchi Y."/>
            <person name="Li X.-Y."/>
            <person name="Koyama T."/>
            <person name="Miki K."/>
        </authorList>
    </citation>
    <scope>X-RAY CRYSTALLOGRAPHY (2.2 ANGSTROMS)</scope>
    <scope>SUBUNIT</scope>
    <source>
        <strain>B-P 26</strain>
    </source>
</reference>
<evidence type="ECO:0000250" key="1"/>
<evidence type="ECO:0000269" key="2">
    <source>
    </source>
</evidence>
<evidence type="ECO:0000269" key="3">
    <source>
    </source>
</evidence>
<evidence type="ECO:0000269" key="4">
    <source>
    </source>
</evidence>
<evidence type="ECO:0000269" key="5">
    <source>
    </source>
</evidence>
<evidence type="ECO:0000269" key="6">
    <source>
    </source>
</evidence>
<evidence type="ECO:0000269" key="7">
    <source>
    </source>
</evidence>
<evidence type="ECO:0000305" key="8"/>
<evidence type="ECO:0007829" key="9">
    <source>
        <dbReference type="PDB" id="1F75"/>
    </source>
</evidence>
<accession>O82827</accession>
<dbReference type="EC" id="2.5.1.31"/>
<dbReference type="EMBL" id="AB004319">
    <property type="protein sequence ID" value="BAA31993.1"/>
    <property type="molecule type" value="Genomic_DNA"/>
</dbReference>
<dbReference type="PIR" id="T48857">
    <property type="entry name" value="T48857"/>
</dbReference>
<dbReference type="PDB" id="1F75">
    <property type="method" value="X-ray"/>
    <property type="resolution" value="2.20 A"/>
    <property type="chains" value="A/B=1-249"/>
</dbReference>
<dbReference type="PDBsum" id="1F75"/>
<dbReference type="SMR" id="O82827"/>
<dbReference type="KEGG" id="ag:BAA31993"/>
<dbReference type="BRENDA" id="2.5.1.31">
    <property type="organism ID" value="3348"/>
</dbReference>
<dbReference type="EvolutionaryTrace" id="O82827"/>
<dbReference type="GO" id="GO:0005829">
    <property type="term" value="C:cytosol"/>
    <property type="evidence" value="ECO:0007669"/>
    <property type="project" value="TreeGrafter"/>
</dbReference>
<dbReference type="GO" id="GO:0008834">
    <property type="term" value="F:ditrans,polycis-undecaprenyl-diphosphate synthase [(2E,6E)-farnesyl-diphosphate specific] activity"/>
    <property type="evidence" value="ECO:0007669"/>
    <property type="project" value="UniProtKB-EC"/>
</dbReference>
<dbReference type="GO" id="GO:0000287">
    <property type="term" value="F:magnesium ion binding"/>
    <property type="evidence" value="ECO:0007669"/>
    <property type="project" value="UniProtKB-UniRule"/>
</dbReference>
<dbReference type="GO" id="GO:0030145">
    <property type="term" value="F:manganese ion binding"/>
    <property type="evidence" value="ECO:0007669"/>
    <property type="project" value="TreeGrafter"/>
</dbReference>
<dbReference type="GO" id="GO:0016094">
    <property type="term" value="P:polyprenol biosynthetic process"/>
    <property type="evidence" value="ECO:0007669"/>
    <property type="project" value="TreeGrafter"/>
</dbReference>
<dbReference type="CDD" id="cd00475">
    <property type="entry name" value="Cis_IPPS"/>
    <property type="match status" value="1"/>
</dbReference>
<dbReference type="FunFam" id="3.40.1180.10:FF:000001">
    <property type="entry name" value="(2E,6E)-farnesyl-diphosphate-specific ditrans,polycis-undecaprenyl-diphosphate synthase"/>
    <property type="match status" value="1"/>
</dbReference>
<dbReference type="Gene3D" id="3.40.1180.10">
    <property type="entry name" value="Decaprenyl diphosphate synthase-like"/>
    <property type="match status" value="1"/>
</dbReference>
<dbReference type="HAMAP" id="MF_01139">
    <property type="entry name" value="ISPT"/>
    <property type="match status" value="1"/>
</dbReference>
<dbReference type="InterPro" id="IPR001441">
    <property type="entry name" value="UPP_synth-like"/>
</dbReference>
<dbReference type="InterPro" id="IPR018520">
    <property type="entry name" value="UPP_synth-like_CS"/>
</dbReference>
<dbReference type="InterPro" id="IPR036424">
    <property type="entry name" value="UPP_synth-like_sf"/>
</dbReference>
<dbReference type="NCBIfam" id="NF011405">
    <property type="entry name" value="PRK14830.1"/>
    <property type="match status" value="1"/>
</dbReference>
<dbReference type="NCBIfam" id="TIGR00055">
    <property type="entry name" value="uppS"/>
    <property type="match status" value="1"/>
</dbReference>
<dbReference type="PANTHER" id="PTHR10291:SF0">
    <property type="entry name" value="DEHYDRODOLICHYL DIPHOSPHATE SYNTHASE 2"/>
    <property type="match status" value="1"/>
</dbReference>
<dbReference type="PANTHER" id="PTHR10291">
    <property type="entry name" value="DEHYDRODOLICHYL DIPHOSPHATE SYNTHASE FAMILY MEMBER"/>
    <property type="match status" value="1"/>
</dbReference>
<dbReference type="Pfam" id="PF01255">
    <property type="entry name" value="Prenyltransf"/>
    <property type="match status" value="1"/>
</dbReference>
<dbReference type="SUPFAM" id="SSF64005">
    <property type="entry name" value="Undecaprenyl diphosphate synthase"/>
    <property type="match status" value="1"/>
</dbReference>
<dbReference type="PROSITE" id="PS01066">
    <property type="entry name" value="UPP_SYNTHASE"/>
    <property type="match status" value="1"/>
</dbReference>
<sequence>MFPIKKRKAIKNNNINAAQIPKHIAIIMDGNGRWAKQKKMPRIKGHYEGMQTVKKITRYASDLGVKYLTLYAFSTENWSRPKDEVNYLMKLPGDFLNTFLPELIEKNVKVETIGFIDDLPDHTKKAVLEAKEKTKHNTGLTLVFALNYGGRKEIISAVQLIAERYKSGEISLDEISETHFNEYLFTANMPDPELLIRTSGEERLSNFLIWQCSYSEFVFIDEFWPDFNEESLAQCISIYQNRHRRFGGL</sequence>